<evidence type="ECO:0000250" key="1"/>
<evidence type="ECO:0000255" key="2"/>
<evidence type="ECO:0000305" key="3"/>
<gene>
    <name type="primary">mnhA1</name>
    <name type="ordered locus">SACOL0955</name>
</gene>
<proteinExistence type="inferred from homology"/>
<protein>
    <recommendedName>
        <fullName>Na(+)/H(+) antiporter subunit A1</fullName>
    </recommendedName>
    <alternativeName>
        <fullName>Mnh complex subunit A1</fullName>
    </alternativeName>
</protein>
<dbReference type="EMBL" id="CP000046">
    <property type="protein sequence ID" value="AAW37923.1"/>
    <property type="molecule type" value="Genomic_DNA"/>
</dbReference>
<dbReference type="RefSeq" id="WP_000054609.1">
    <property type="nucleotide sequence ID" value="NZ_JBGOFO010000002.1"/>
</dbReference>
<dbReference type="SMR" id="Q5HHD3"/>
<dbReference type="KEGG" id="sac:SACOL0955"/>
<dbReference type="HOGENOM" id="CLU_007100_2_1_9"/>
<dbReference type="Proteomes" id="UP000000530">
    <property type="component" value="Chromosome"/>
</dbReference>
<dbReference type="GO" id="GO:0005886">
    <property type="term" value="C:plasma membrane"/>
    <property type="evidence" value="ECO:0007669"/>
    <property type="project" value="UniProtKB-SubCell"/>
</dbReference>
<dbReference type="GO" id="GO:0015297">
    <property type="term" value="F:antiporter activity"/>
    <property type="evidence" value="ECO:0007669"/>
    <property type="project" value="UniProtKB-KW"/>
</dbReference>
<dbReference type="GO" id="GO:1902600">
    <property type="term" value="P:proton transmembrane transport"/>
    <property type="evidence" value="ECO:0007669"/>
    <property type="project" value="UniProtKB-KW"/>
</dbReference>
<dbReference type="GO" id="GO:0006814">
    <property type="term" value="P:sodium ion transport"/>
    <property type="evidence" value="ECO:0007669"/>
    <property type="project" value="UniProtKB-KW"/>
</dbReference>
<dbReference type="InterPro" id="IPR050616">
    <property type="entry name" value="CPA3_Na-H_Antiporter_A"/>
</dbReference>
<dbReference type="InterPro" id="IPR005663">
    <property type="entry name" value="MrpA/MnhA1/PhaAB"/>
</dbReference>
<dbReference type="InterPro" id="IPR025383">
    <property type="entry name" value="MrpA_C/MbhD"/>
</dbReference>
<dbReference type="InterPro" id="IPR046806">
    <property type="entry name" value="MrpA_C/MbhE"/>
</dbReference>
<dbReference type="InterPro" id="IPR001750">
    <property type="entry name" value="ND/Mrp_TM"/>
</dbReference>
<dbReference type="InterPro" id="IPR001516">
    <property type="entry name" value="Proton_antipo_N"/>
</dbReference>
<dbReference type="NCBIfam" id="TIGR00940">
    <property type="entry name" value="2a6301s01"/>
    <property type="match status" value="1"/>
</dbReference>
<dbReference type="NCBIfam" id="NF009285">
    <property type="entry name" value="PRK12645.1"/>
    <property type="match status" value="1"/>
</dbReference>
<dbReference type="PANTHER" id="PTHR43373">
    <property type="entry name" value="NA(+)/H(+) ANTIPORTER SUBUNIT"/>
    <property type="match status" value="1"/>
</dbReference>
<dbReference type="PANTHER" id="PTHR43373:SF1">
    <property type="entry name" value="NA(+)_H(+) ANTIPORTER SUBUNIT A"/>
    <property type="match status" value="1"/>
</dbReference>
<dbReference type="Pfam" id="PF13244">
    <property type="entry name" value="MbhD"/>
    <property type="match status" value="1"/>
</dbReference>
<dbReference type="Pfam" id="PF20501">
    <property type="entry name" value="MbhE"/>
    <property type="match status" value="1"/>
</dbReference>
<dbReference type="Pfam" id="PF00361">
    <property type="entry name" value="Proton_antipo_M"/>
    <property type="match status" value="1"/>
</dbReference>
<dbReference type="Pfam" id="PF00662">
    <property type="entry name" value="Proton_antipo_N"/>
    <property type="match status" value="1"/>
</dbReference>
<dbReference type="PRINTS" id="PR01434">
    <property type="entry name" value="NADHDHGNASE5"/>
</dbReference>
<dbReference type="PRINTS" id="PR01435">
    <property type="entry name" value="NPOXDRDTASE5"/>
</dbReference>
<sequence>MSLLHIAVILPLIFALIIPILYRFFKRIHLGWFVLPVPIVIFIYMLTLIKTTMSGNTVMKTLNWMPHFGMNFDLYLDGLGLLFSLLISGIGSLVVLYSIGYLSKSEQLGNFYCYLLLFMGAMLGVVLSDNVIILYLFWELTSFSSFLLISFWRERQASIYGAQKSLIITVFGGLSLLGGIILLAIPTQSFSIQYMIQHASEIQNSPFFIFAMILIMIGAFTKSAQFPFYIWLPDAMEAPTPVSAYLHSATMVKAGLYLIARMTPIFAASQGWVWTVTLVGLITLFWASLNATKQQDLKGILAFSTVSQLGMIMAMLGIGAISYHYQGDDSKIYAAAFTAAIFHLINHATFKGALFMITGAVDHSTGTRDVKKLGGLLTIMPISFTITVITALSMAGVPPFNGFLSKESFLETTFTASQANLFSVDTLGYLFPIIGIVGSVFTFVYSIKFIMHIFFGQYKPEQLPKKAHEVSILMLLSPAILATLVIVFGLFPGILTNSIIEPATSSINHTVIDDVEFHMFHGLTPAFLSTLVIYILGILLIVTFSYWVKLLQRQPGKLTFNYWYNRSANVIPNYSEKMTNSYVTDYSRNNLVIIFGALILLTFVTIFSVPFNINFKDVSPIRIFEVCIVILLLSAAFLILFAKSRLFSIIMLSAVGYAVSVLFIFFKAPDLALTQFVVESISTALFLLCFYHLPNLNRYNEKRSFQLTNALIAGGVGLSVIIIGLIAYGNRHFESISKFYQEHVYDLAHGKNMVNVILVDFRGMDTLFESSVLGIAGLAVYTMIKLRKKRQTQGNEVKNHE</sequence>
<comment type="function">
    <text evidence="1">Mnh complex is a Na(+)/H(+) antiporter involved in Na(+) excretion.</text>
</comment>
<comment type="subunit">
    <text evidence="1">May form a heterooligomeric complex that consists of seven subunits: mnhA1, mnhB1, mnhC1, mnhD1, mnhE1, mnhF1 and mnhG1.</text>
</comment>
<comment type="subcellular location">
    <subcellularLocation>
        <location evidence="3">Cell membrane</location>
        <topology evidence="3">Multi-pass membrane protein</topology>
    </subcellularLocation>
</comment>
<comment type="similarity">
    <text evidence="3">Belongs to the CPA3 antiporters (TC 2.A.63) subunit A family.</text>
</comment>
<keyword id="KW-0050">Antiport</keyword>
<keyword id="KW-1003">Cell membrane</keyword>
<keyword id="KW-0375">Hydrogen ion transport</keyword>
<keyword id="KW-0406">Ion transport</keyword>
<keyword id="KW-0472">Membrane</keyword>
<keyword id="KW-0915">Sodium</keyword>
<keyword id="KW-0739">Sodium transport</keyword>
<keyword id="KW-0812">Transmembrane</keyword>
<keyword id="KW-1133">Transmembrane helix</keyword>
<keyword id="KW-0813">Transport</keyword>
<accession>Q5HHD3</accession>
<feature type="chain" id="PRO_0000217066" description="Na(+)/H(+) antiporter subunit A1">
    <location>
        <begin position="1"/>
        <end position="801"/>
    </location>
</feature>
<feature type="transmembrane region" description="Helical" evidence="2">
    <location>
        <begin position="4"/>
        <end position="25"/>
    </location>
</feature>
<feature type="transmembrane region" description="Helical" evidence="2">
    <location>
        <begin position="30"/>
        <end position="49"/>
    </location>
</feature>
<feature type="transmembrane region" description="Helical" evidence="2">
    <location>
        <begin position="79"/>
        <end position="101"/>
    </location>
</feature>
<feature type="transmembrane region" description="Helical" evidence="2">
    <location>
        <begin position="108"/>
        <end position="127"/>
    </location>
</feature>
<feature type="transmembrane region" description="Helical" evidence="2">
    <location>
        <begin position="131"/>
        <end position="153"/>
    </location>
</feature>
<feature type="transmembrane region" description="Helical" evidence="2">
    <location>
        <begin position="166"/>
        <end position="188"/>
    </location>
</feature>
<feature type="transmembrane region" description="Helical" evidence="2">
    <location>
        <begin position="208"/>
        <end position="230"/>
    </location>
</feature>
<feature type="transmembrane region" description="Helical" evidence="2">
    <location>
        <begin position="243"/>
        <end position="265"/>
    </location>
</feature>
<feature type="transmembrane region" description="Helical" evidence="2">
    <location>
        <begin position="270"/>
        <end position="289"/>
    </location>
</feature>
<feature type="transmembrane region" description="Helical" evidence="2">
    <location>
        <begin position="302"/>
        <end position="324"/>
    </location>
</feature>
<feature type="transmembrane region" description="Helical" evidence="2">
    <location>
        <begin position="339"/>
        <end position="361"/>
    </location>
</feature>
<feature type="transmembrane region" description="Helical" evidence="2">
    <location>
        <begin position="373"/>
        <end position="395"/>
    </location>
</feature>
<feature type="transmembrane region" description="Helical" evidence="2">
    <location>
        <begin position="429"/>
        <end position="451"/>
    </location>
</feature>
<feature type="transmembrane region" description="Helical" evidence="2">
    <location>
        <begin position="472"/>
        <end position="494"/>
    </location>
</feature>
<feature type="transmembrane region" description="Helical" evidence="2">
    <location>
        <begin position="526"/>
        <end position="548"/>
    </location>
</feature>
<feature type="transmembrane region" description="Helical" evidence="2">
    <location>
        <begin position="589"/>
        <end position="611"/>
    </location>
</feature>
<feature type="transmembrane region" description="Helical" evidence="2">
    <location>
        <begin position="621"/>
        <end position="641"/>
    </location>
</feature>
<feature type="transmembrane region" description="Helical" evidence="2">
    <location>
        <begin position="646"/>
        <end position="668"/>
    </location>
</feature>
<feature type="transmembrane region" description="Helical" evidence="2">
    <location>
        <begin position="672"/>
        <end position="694"/>
    </location>
</feature>
<feature type="transmembrane region" description="Helical" evidence="2">
    <location>
        <begin position="707"/>
        <end position="729"/>
    </location>
</feature>
<feature type="transmembrane region" description="Helical" evidence="2">
    <location>
        <begin position="767"/>
        <end position="784"/>
    </location>
</feature>
<reference key="1">
    <citation type="journal article" date="2005" name="J. Bacteriol.">
        <title>Insights on evolution of virulence and resistance from the complete genome analysis of an early methicillin-resistant Staphylococcus aureus strain and a biofilm-producing methicillin-resistant Staphylococcus epidermidis strain.</title>
        <authorList>
            <person name="Gill S.R."/>
            <person name="Fouts D.E."/>
            <person name="Archer G.L."/>
            <person name="Mongodin E.F."/>
            <person name="DeBoy R.T."/>
            <person name="Ravel J."/>
            <person name="Paulsen I.T."/>
            <person name="Kolonay J.F."/>
            <person name="Brinkac L.M."/>
            <person name="Beanan M.J."/>
            <person name="Dodson R.J."/>
            <person name="Daugherty S.C."/>
            <person name="Madupu R."/>
            <person name="Angiuoli S.V."/>
            <person name="Durkin A.S."/>
            <person name="Haft D.H."/>
            <person name="Vamathevan J.J."/>
            <person name="Khouri H."/>
            <person name="Utterback T.R."/>
            <person name="Lee C."/>
            <person name="Dimitrov G."/>
            <person name="Jiang L."/>
            <person name="Qin H."/>
            <person name="Weidman J."/>
            <person name="Tran K."/>
            <person name="Kang K.H."/>
            <person name="Hance I.R."/>
            <person name="Nelson K.E."/>
            <person name="Fraser C.M."/>
        </authorList>
    </citation>
    <scope>NUCLEOTIDE SEQUENCE [LARGE SCALE GENOMIC DNA]</scope>
    <source>
        <strain>COL</strain>
    </source>
</reference>
<organism>
    <name type="scientific">Staphylococcus aureus (strain COL)</name>
    <dbReference type="NCBI Taxonomy" id="93062"/>
    <lineage>
        <taxon>Bacteria</taxon>
        <taxon>Bacillati</taxon>
        <taxon>Bacillota</taxon>
        <taxon>Bacilli</taxon>
        <taxon>Bacillales</taxon>
        <taxon>Staphylococcaceae</taxon>
        <taxon>Staphylococcus</taxon>
    </lineage>
</organism>
<name>MNHA1_STAAC</name>